<accession>Q8ZRW9</accession>
<organism>
    <name type="scientific">Salmonella typhimurium (strain LT2 / SGSC1412 / ATCC 700720)</name>
    <dbReference type="NCBI Taxonomy" id="99287"/>
    <lineage>
        <taxon>Bacteria</taxon>
        <taxon>Pseudomonadati</taxon>
        <taxon>Pseudomonadota</taxon>
        <taxon>Gammaproteobacteria</taxon>
        <taxon>Enterobacterales</taxon>
        <taxon>Enterobacteriaceae</taxon>
        <taxon>Salmonella</taxon>
    </lineage>
</organism>
<proteinExistence type="inferred from homology"/>
<gene>
    <name type="primary">fixC</name>
    <name type="ordered locus">STM0077</name>
</gene>
<feature type="chain" id="PRO_0000200694" description="Protein FixC">
    <location>
        <begin position="1"/>
        <end position="428"/>
    </location>
</feature>
<reference key="1">
    <citation type="journal article" date="2001" name="Nature">
        <title>Complete genome sequence of Salmonella enterica serovar Typhimurium LT2.</title>
        <authorList>
            <person name="McClelland M."/>
            <person name="Sanderson K.E."/>
            <person name="Spieth J."/>
            <person name="Clifton S.W."/>
            <person name="Latreille P."/>
            <person name="Courtney L."/>
            <person name="Porwollik S."/>
            <person name="Ali J."/>
            <person name="Dante M."/>
            <person name="Du F."/>
            <person name="Hou S."/>
            <person name="Layman D."/>
            <person name="Leonard S."/>
            <person name="Nguyen C."/>
            <person name="Scott K."/>
            <person name="Holmes A."/>
            <person name="Grewal N."/>
            <person name="Mulvaney E."/>
            <person name="Ryan E."/>
            <person name="Sun H."/>
            <person name="Florea L."/>
            <person name="Miller W."/>
            <person name="Stoneking T."/>
            <person name="Nhan M."/>
            <person name="Waterston R."/>
            <person name="Wilson R.K."/>
        </authorList>
    </citation>
    <scope>NUCLEOTIDE SEQUENCE [LARGE SCALE GENOMIC DNA]</scope>
    <source>
        <strain>LT2 / SGSC1412 / ATCC 700720</strain>
    </source>
</reference>
<protein>
    <recommendedName>
        <fullName>Protein FixC</fullName>
    </recommendedName>
</protein>
<comment type="function">
    <text evidence="1">Could be part of an electron transfer system required for anaerobic carnitine reduction.</text>
</comment>
<comment type="cofactor">
    <cofactor evidence="2">
        <name>FAD</name>
        <dbReference type="ChEBI" id="CHEBI:57692"/>
    </cofactor>
</comment>
<comment type="similarity">
    <text evidence="2">Belongs to the ETF-QO/FixC family.</text>
</comment>
<keyword id="KW-0249">Electron transport</keyword>
<keyword id="KW-0274">FAD</keyword>
<keyword id="KW-0285">Flavoprotein</keyword>
<keyword id="KW-0560">Oxidoreductase</keyword>
<keyword id="KW-1185">Reference proteome</keyword>
<keyword id="KW-0813">Transport</keyword>
<sequence>MSEDIFDAIIVGAGLAGSVAALVLAREGAQVLVIERGNSAGAKNVTGGRLYAHSLERIIPGFADQAPIERMITHEKLAFMTDNGAMTIDYCNGEDASASQVSYSVLRSKFDAWLMEQAEEAGAQLITGIRVDNVVQRDGKVVGVEADGDILEAKVVILADGVNSLLAEKLGMTKRVEASHVAVGVKELIELPKLVIEDRFQLQGNEGAACLFAGAPTDGLMGGGFLYTNETTLSLGLVCGLHHLKDAKKSVPQMLEDFKQHPAVAPLIAGGKLVEYAAHVVPEAGMNMQPELVGDGVLIAGDAAGMCMNLGFTIRGMDLAISAGEAAAKTVLSAMKRDDFSKQSLGEYRQHLDEGPMRDMRMYQKLPAFLDNPRMFTAYPEMAVNIARDLFTVDGSAPVPMRKKILRHAKKVGFINLMKDGLKGVTVL</sequence>
<dbReference type="EMBL" id="AE006468">
    <property type="protein sequence ID" value="AAL19041.1"/>
    <property type="molecule type" value="Genomic_DNA"/>
</dbReference>
<dbReference type="RefSeq" id="NP_459082.1">
    <property type="nucleotide sequence ID" value="NC_003197.2"/>
</dbReference>
<dbReference type="RefSeq" id="WP_001287776.1">
    <property type="nucleotide sequence ID" value="NC_003197.2"/>
</dbReference>
<dbReference type="SMR" id="Q8ZRW9"/>
<dbReference type="STRING" id="99287.STM0077"/>
<dbReference type="PaxDb" id="99287-STM0077"/>
<dbReference type="GeneID" id="1251595"/>
<dbReference type="KEGG" id="stm:STM0077"/>
<dbReference type="PATRIC" id="fig|99287.12.peg.80"/>
<dbReference type="HOGENOM" id="CLU_050977_0_0_6"/>
<dbReference type="PhylomeDB" id="Q8ZRW9"/>
<dbReference type="BioCyc" id="SENT99287:STM0077-MONOMER"/>
<dbReference type="Proteomes" id="UP000001014">
    <property type="component" value="Chromosome"/>
</dbReference>
<dbReference type="GO" id="GO:0071949">
    <property type="term" value="F:FAD binding"/>
    <property type="evidence" value="ECO:0007669"/>
    <property type="project" value="InterPro"/>
</dbReference>
<dbReference type="GO" id="GO:0016491">
    <property type="term" value="F:oxidoreductase activity"/>
    <property type="evidence" value="ECO:0007669"/>
    <property type="project" value="UniProtKB-KW"/>
</dbReference>
<dbReference type="Gene3D" id="3.50.50.60">
    <property type="entry name" value="FAD/NAD(P)-binding domain"/>
    <property type="match status" value="1"/>
</dbReference>
<dbReference type="InterPro" id="IPR002938">
    <property type="entry name" value="FAD-bd"/>
</dbReference>
<dbReference type="InterPro" id="IPR036188">
    <property type="entry name" value="FAD/NAD-bd_sf"/>
</dbReference>
<dbReference type="InterPro" id="IPR039651">
    <property type="entry name" value="FixC-like"/>
</dbReference>
<dbReference type="NCBIfam" id="NF007450">
    <property type="entry name" value="PRK10015.1"/>
    <property type="match status" value="1"/>
</dbReference>
<dbReference type="NCBIfam" id="NF007542">
    <property type="entry name" value="PRK10157.1"/>
    <property type="match status" value="1"/>
</dbReference>
<dbReference type="PANTHER" id="PTHR43624">
    <property type="entry name" value="ELECTRON TRANSFER FLAVOPROTEIN-QUINONE OXIDOREDUCTASE YDIS-RELATED"/>
    <property type="match status" value="1"/>
</dbReference>
<dbReference type="PANTHER" id="PTHR43624:SF1">
    <property type="entry name" value="PROTEIN FIXC"/>
    <property type="match status" value="1"/>
</dbReference>
<dbReference type="Pfam" id="PF01494">
    <property type="entry name" value="FAD_binding_3"/>
    <property type="match status" value="1"/>
</dbReference>
<dbReference type="PRINTS" id="PR00420">
    <property type="entry name" value="RNGMNOXGNASE"/>
</dbReference>
<dbReference type="SUPFAM" id="SSF54373">
    <property type="entry name" value="FAD-linked reductases, C-terminal domain"/>
    <property type="match status" value="1"/>
</dbReference>
<dbReference type="SUPFAM" id="SSF51905">
    <property type="entry name" value="FAD/NAD(P)-binding domain"/>
    <property type="match status" value="1"/>
</dbReference>
<name>FIXC_SALTY</name>
<evidence type="ECO:0000250" key="1"/>
<evidence type="ECO:0000305" key="2"/>